<gene>
    <name evidence="1" type="primary">rpsH</name>
    <name type="ordered locus">SP70585_0279</name>
</gene>
<evidence type="ECO:0000255" key="1">
    <source>
        <dbReference type="HAMAP-Rule" id="MF_01302"/>
    </source>
</evidence>
<evidence type="ECO:0000305" key="2"/>
<proteinExistence type="inferred from homology"/>
<sequence>MVMTDPIADFLTRIRNANQAKHEVLEVPASNIKKGIAEILKREGFVKNVEIIEDDKQGVIRVFLKYGPNGEKVITNLKRVSKPGLRVYKKREDLPKVLNGLGIAILSTSEGLLTDKEARQKNVGGEVIAYVW</sequence>
<organism>
    <name type="scientific">Streptococcus pneumoniae (strain 70585)</name>
    <dbReference type="NCBI Taxonomy" id="488221"/>
    <lineage>
        <taxon>Bacteria</taxon>
        <taxon>Bacillati</taxon>
        <taxon>Bacillota</taxon>
        <taxon>Bacilli</taxon>
        <taxon>Lactobacillales</taxon>
        <taxon>Streptococcaceae</taxon>
        <taxon>Streptococcus</taxon>
    </lineage>
</organism>
<feature type="chain" id="PRO_1000165352" description="Small ribosomal subunit protein uS8">
    <location>
        <begin position="1"/>
        <end position="132"/>
    </location>
</feature>
<accession>C1CAM6</accession>
<protein>
    <recommendedName>
        <fullName evidence="1">Small ribosomal subunit protein uS8</fullName>
    </recommendedName>
    <alternativeName>
        <fullName evidence="2">30S ribosomal protein S8</fullName>
    </alternativeName>
</protein>
<reference key="1">
    <citation type="journal article" date="2010" name="Genome Biol.">
        <title>Structure and dynamics of the pan-genome of Streptococcus pneumoniae and closely related species.</title>
        <authorList>
            <person name="Donati C."/>
            <person name="Hiller N.L."/>
            <person name="Tettelin H."/>
            <person name="Muzzi A."/>
            <person name="Croucher N.J."/>
            <person name="Angiuoli S.V."/>
            <person name="Oggioni M."/>
            <person name="Dunning Hotopp J.C."/>
            <person name="Hu F.Z."/>
            <person name="Riley D.R."/>
            <person name="Covacci A."/>
            <person name="Mitchell T.J."/>
            <person name="Bentley S.D."/>
            <person name="Kilian M."/>
            <person name="Ehrlich G.D."/>
            <person name="Rappuoli R."/>
            <person name="Moxon E.R."/>
            <person name="Masignani V."/>
        </authorList>
    </citation>
    <scope>NUCLEOTIDE SEQUENCE [LARGE SCALE GENOMIC DNA]</scope>
    <source>
        <strain>70585</strain>
    </source>
</reference>
<keyword id="KW-0687">Ribonucleoprotein</keyword>
<keyword id="KW-0689">Ribosomal protein</keyword>
<keyword id="KW-0694">RNA-binding</keyword>
<keyword id="KW-0699">rRNA-binding</keyword>
<dbReference type="EMBL" id="CP000918">
    <property type="protein sequence ID" value="ACO17761.1"/>
    <property type="molecule type" value="Genomic_DNA"/>
</dbReference>
<dbReference type="RefSeq" id="WP_000245505.1">
    <property type="nucleotide sequence ID" value="NC_012468.1"/>
</dbReference>
<dbReference type="SMR" id="C1CAM6"/>
<dbReference type="GeneID" id="45652295"/>
<dbReference type="KEGG" id="snm:SP70585_0279"/>
<dbReference type="HOGENOM" id="CLU_098428_0_2_9"/>
<dbReference type="Proteomes" id="UP000002211">
    <property type="component" value="Chromosome"/>
</dbReference>
<dbReference type="GO" id="GO:1990904">
    <property type="term" value="C:ribonucleoprotein complex"/>
    <property type="evidence" value="ECO:0007669"/>
    <property type="project" value="UniProtKB-KW"/>
</dbReference>
<dbReference type="GO" id="GO:0005840">
    <property type="term" value="C:ribosome"/>
    <property type="evidence" value="ECO:0007669"/>
    <property type="project" value="UniProtKB-KW"/>
</dbReference>
<dbReference type="GO" id="GO:0019843">
    <property type="term" value="F:rRNA binding"/>
    <property type="evidence" value="ECO:0007669"/>
    <property type="project" value="UniProtKB-UniRule"/>
</dbReference>
<dbReference type="GO" id="GO:0003735">
    <property type="term" value="F:structural constituent of ribosome"/>
    <property type="evidence" value="ECO:0007669"/>
    <property type="project" value="InterPro"/>
</dbReference>
<dbReference type="GO" id="GO:0006412">
    <property type="term" value="P:translation"/>
    <property type="evidence" value="ECO:0007669"/>
    <property type="project" value="UniProtKB-UniRule"/>
</dbReference>
<dbReference type="FunFam" id="3.30.1370.30:FF:000002">
    <property type="entry name" value="30S ribosomal protein S8"/>
    <property type="match status" value="1"/>
</dbReference>
<dbReference type="FunFam" id="3.30.1490.10:FF:000001">
    <property type="entry name" value="30S ribosomal protein S8"/>
    <property type="match status" value="1"/>
</dbReference>
<dbReference type="Gene3D" id="3.30.1370.30">
    <property type="match status" value="1"/>
</dbReference>
<dbReference type="Gene3D" id="3.30.1490.10">
    <property type="match status" value="1"/>
</dbReference>
<dbReference type="HAMAP" id="MF_01302_B">
    <property type="entry name" value="Ribosomal_uS8_B"/>
    <property type="match status" value="1"/>
</dbReference>
<dbReference type="InterPro" id="IPR000630">
    <property type="entry name" value="Ribosomal_uS8"/>
</dbReference>
<dbReference type="InterPro" id="IPR047863">
    <property type="entry name" value="Ribosomal_uS8_CS"/>
</dbReference>
<dbReference type="InterPro" id="IPR035987">
    <property type="entry name" value="Ribosomal_uS8_sf"/>
</dbReference>
<dbReference type="NCBIfam" id="NF001109">
    <property type="entry name" value="PRK00136.1"/>
    <property type="match status" value="1"/>
</dbReference>
<dbReference type="PANTHER" id="PTHR11758">
    <property type="entry name" value="40S RIBOSOMAL PROTEIN S15A"/>
    <property type="match status" value="1"/>
</dbReference>
<dbReference type="Pfam" id="PF00410">
    <property type="entry name" value="Ribosomal_S8"/>
    <property type="match status" value="1"/>
</dbReference>
<dbReference type="SUPFAM" id="SSF56047">
    <property type="entry name" value="Ribosomal protein S8"/>
    <property type="match status" value="1"/>
</dbReference>
<dbReference type="PROSITE" id="PS00053">
    <property type="entry name" value="RIBOSOMAL_S8"/>
    <property type="match status" value="1"/>
</dbReference>
<comment type="function">
    <text evidence="1">One of the primary rRNA binding proteins, it binds directly to 16S rRNA central domain where it helps coordinate assembly of the platform of the 30S subunit.</text>
</comment>
<comment type="subunit">
    <text evidence="1">Part of the 30S ribosomal subunit. Contacts proteins S5 and S12.</text>
</comment>
<comment type="similarity">
    <text evidence="1">Belongs to the universal ribosomal protein uS8 family.</text>
</comment>
<name>RS8_STRP7</name>